<feature type="propeptide" id="PRO_0000020248" evidence="2">
    <location>
        <begin position="1"/>
        <end position="6"/>
    </location>
</feature>
<feature type="chain" id="PRO_0000020249" description="Archaerhodopsin-1">
    <location>
        <begin position="7"/>
        <end position="260"/>
    </location>
</feature>
<feature type="topological domain" description="Extracellular" evidence="1">
    <location>
        <begin position="7"/>
        <end position="20"/>
    </location>
</feature>
<feature type="transmembrane region" description="Helical; Name=Helix A" evidence="1">
    <location>
        <begin position="21"/>
        <end position="42"/>
    </location>
</feature>
<feature type="topological domain" description="Cytoplasmic" evidence="1">
    <location>
        <begin position="43"/>
        <end position="51"/>
    </location>
</feature>
<feature type="transmembrane region" description="Helical; Name=Helix B" evidence="1">
    <location>
        <begin position="52"/>
        <end position="73"/>
    </location>
</feature>
<feature type="topological domain" description="Extracellular" evidence="1">
    <location>
        <begin position="74"/>
        <end position="91"/>
    </location>
</feature>
<feature type="transmembrane region" description="Helical; Name=Helix C" evidence="1">
    <location>
        <begin position="92"/>
        <end position="113"/>
    </location>
</feature>
<feature type="topological domain" description="Cytoplasmic" evidence="1">
    <location>
        <begin position="114"/>
        <end position="116"/>
    </location>
</feature>
<feature type="transmembrane region" description="Helical; Name=Helix D" evidence="1">
    <location>
        <begin position="117"/>
        <end position="139"/>
    </location>
</feature>
<feature type="topological domain" description="Extracellular" evidence="1">
    <location>
        <begin position="140"/>
        <end position="143"/>
    </location>
</feature>
<feature type="transmembrane region" description="Helical; Name=Helix E" evidence="1">
    <location>
        <begin position="144"/>
        <end position="172"/>
    </location>
</feature>
<feature type="topological domain" description="Cytoplasmic" evidence="1">
    <location>
        <begin position="173"/>
        <end position="176"/>
    </location>
</feature>
<feature type="transmembrane region" description="Helical; Name=Helix F" evidence="1">
    <location>
        <begin position="177"/>
        <end position="204"/>
    </location>
</feature>
<feature type="topological domain" description="Extracellular" evidence="1">
    <location>
        <begin position="205"/>
        <end position="212"/>
    </location>
</feature>
<feature type="transmembrane region" description="Helical; Name=Helix G" evidence="1">
    <location>
        <begin position="213"/>
        <end position="245"/>
    </location>
</feature>
<feature type="topological domain" description="Cytoplasmic" evidence="1">
    <location>
        <begin position="246"/>
        <end position="260"/>
    </location>
</feature>
<feature type="modified residue" description="N6-(retinylidene)lysine">
    <location>
        <position position="228"/>
    </location>
</feature>
<feature type="strand" evidence="4">
    <location>
        <begin position="16"/>
        <end position="18"/>
    </location>
</feature>
<feature type="helix" evidence="4">
    <location>
        <begin position="22"/>
        <end position="43"/>
    </location>
</feature>
<feature type="helix" evidence="4">
    <location>
        <begin position="51"/>
        <end position="74"/>
    </location>
</feature>
<feature type="turn" evidence="4">
    <location>
        <begin position="75"/>
        <end position="77"/>
    </location>
</feature>
<feature type="strand" evidence="4">
    <location>
        <begin position="78"/>
        <end position="83"/>
    </location>
</feature>
<feature type="strand" evidence="4">
    <location>
        <begin position="86"/>
        <end position="91"/>
    </location>
</feature>
<feature type="helix" evidence="4">
    <location>
        <begin position="93"/>
        <end position="111"/>
    </location>
</feature>
<feature type="turn" evidence="4">
    <location>
        <begin position="112"/>
        <end position="114"/>
    </location>
</feature>
<feature type="helix" evidence="4">
    <location>
        <begin position="117"/>
        <end position="138"/>
    </location>
</feature>
<feature type="helix" evidence="4">
    <location>
        <begin position="143"/>
        <end position="165"/>
    </location>
</feature>
<feature type="helix" evidence="4">
    <location>
        <begin position="167"/>
        <end position="171"/>
    </location>
</feature>
<feature type="helix" evidence="4">
    <location>
        <begin position="177"/>
        <end position="203"/>
    </location>
</feature>
<feature type="turn" evidence="4">
    <location>
        <begin position="205"/>
        <end position="208"/>
    </location>
</feature>
<feature type="helix" evidence="4">
    <location>
        <begin position="213"/>
        <end position="236"/>
    </location>
</feature>
<organism>
    <name type="scientific">Halorubrum ezzemoulense</name>
    <name type="common">Halorubrum chaoviator</name>
    <dbReference type="NCBI Taxonomy" id="337243"/>
    <lineage>
        <taxon>Archaea</taxon>
        <taxon>Methanobacteriati</taxon>
        <taxon>Methanobacteriota</taxon>
        <taxon>Stenosarchaea group</taxon>
        <taxon>Halobacteria</taxon>
        <taxon>Halobacteriales</taxon>
        <taxon>Haloferacaceae</taxon>
        <taxon>Halorubrum</taxon>
    </lineage>
</organism>
<accession>P69051</accession>
<accession>P19585</accession>
<name>BACR1_HALEZ</name>
<keyword id="KW-0002">3D-structure</keyword>
<keyword id="KW-1003">Cell membrane</keyword>
<keyword id="KW-0157">Chromophore</keyword>
<keyword id="KW-0903">Direct protein sequencing</keyword>
<keyword id="KW-0375">Hydrogen ion transport</keyword>
<keyword id="KW-0406">Ion transport</keyword>
<keyword id="KW-0472">Membrane</keyword>
<keyword id="KW-0600">Photoreceptor protein</keyword>
<keyword id="KW-0675">Receptor</keyword>
<keyword id="KW-0681">Retinal protein</keyword>
<keyword id="KW-0716">Sensory transduction</keyword>
<keyword id="KW-0812">Transmembrane</keyword>
<keyword id="KW-1133">Transmembrane helix</keyword>
<keyword id="KW-0813">Transport</keyword>
<evidence type="ECO:0000250" key="1"/>
<evidence type="ECO:0000269" key="2">
    <source>
    </source>
</evidence>
<evidence type="ECO:0000305" key="3"/>
<evidence type="ECO:0007829" key="4">
    <source>
        <dbReference type="PDB" id="1UAZ"/>
    </source>
</evidence>
<protein>
    <recommendedName>
        <fullName>Archaerhodopsin-1</fullName>
        <shortName>AR 1</shortName>
    </recommendedName>
</protein>
<comment type="function">
    <text>Light-driven proton pump. It may interact with bacterioruberin in the claret membrane.</text>
</comment>
<comment type="subcellular location">
    <subcellularLocation>
        <location>Cell membrane</location>
        <topology>Multi-pass membrane protein</topology>
    </subcellularLocation>
</comment>
<comment type="similarity">
    <text evidence="3">Belongs to the archaeal/bacterial/fungal opsin family.</text>
</comment>
<dbReference type="EMBL" id="J05165">
    <property type="protein sequence ID" value="AAA72220.1"/>
    <property type="molecule type" value="Genomic_DNA"/>
</dbReference>
<dbReference type="PIR" id="A34178">
    <property type="entry name" value="A34178"/>
</dbReference>
<dbReference type="PDB" id="1UAZ">
    <property type="method" value="X-ray"/>
    <property type="resolution" value="3.40 A"/>
    <property type="chains" value="A/B=7-260"/>
</dbReference>
<dbReference type="PDBsum" id="1UAZ"/>
<dbReference type="SMR" id="P69051"/>
<dbReference type="OrthoDB" id="186433at2157"/>
<dbReference type="EvolutionaryTrace" id="P69051"/>
<dbReference type="GO" id="GO:0005886">
    <property type="term" value="C:plasma membrane"/>
    <property type="evidence" value="ECO:0007669"/>
    <property type="project" value="UniProtKB-SubCell"/>
</dbReference>
<dbReference type="GO" id="GO:0005216">
    <property type="term" value="F:monoatomic ion channel activity"/>
    <property type="evidence" value="ECO:0007669"/>
    <property type="project" value="InterPro"/>
</dbReference>
<dbReference type="GO" id="GO:0009881">
    <property type="term" value="F:photoreceptor activity"/>
    <property type="evidence" value="ECO:0007669"/>
    <property type="project" value="UniProtKB-KW"/>
</dbReference>
<dbReference type="GO" id="GO:0007602">
    <property type="term" value="P:phototransduction"/>
    <property type="evidence" value="ECO:0007669"/>
    <property type="project" value="UniProtKB-KW"/>
</dbReference>
<dbReference type="GO" id="GO:1902600">
    <property type="term" value="P:proton transmembrane transport"/>
    <property type="evidence" value="ECO:0007669"/>
    <property type="project" value="UniProtKB-KW"/>
</dbReference>
<dbReference type="CDD" id="cd15244">
    <property type="entry name" value="7tm_bacteriorhodopsin"/>
    <property type="match status" value="1"/>
</dbReference>
<dbReference type="Gene3D" id="1.20.1070.10">
    <property type="entry name" value="Rhodopsin 7-helix transmembrane proteins"/>
    <property type="match status" value="1"/>
</dbReference>
<dbReference type="InterPro" id="IPR001425">
    <property type="entry name" value="Arc/bac/fun_rhodopsins"/>
</dbReference>
<dbReference type="InterPro" id="IPR018229">
    <property type="entry name" value="Rhodopsin_retinal_BS"/>
</dbReference>
<dbReference type="PANTHER" id="PTHR28286">
    <property type="match status" value="1"/>
</dbReference>
<dbReference type="PANTHER" id="PTHR28286:SF2">
    <property type="entry name" value="BACTERIORHODOPSIN _OPSIN, NOPA (EUROFUNG)"/>
    <property type="match status" value="1"/>
</dbReference>
<dbReference type="Pfam" id="PF01036">
    <property type="entry name" value="Bac_rhodopsin"/>
    <property type="match status" value="1"/>
</dbReference>
<dbReference type="PRINTS" id="PR00251">
    <property type="entry name" value="BACTRLOPSIN"/>
</dbReference>
<dbReference type="SMART" id="SM01021">
    <property type="entry name" value="Bac_rhodopsin"/>
    <property type="match status" value="1"/>
</dbReference>
<dbReference type="SUPFAM" id="SSF81321">
    <property type="entry name" value="Family A G protein-coupled receptor-like"/>
    <property type="match status" value="1"/>
</dbReference>
<dbReference type="PROSITE" id="PS00950">
    <property type="entry name" value="BACTERIAL_OPSIN_1"/>
    <property type="match status" value="1"/>
</dbReference>
<dbReference type="PROSITE" id="PS00327">
    <property type="entry name" value="BACTERIAL_OPSIN_RET"/>
    <property type="match status" value="1"/>
</dbReference>
<sequence length="260" mass="27852">MDPIALTAAVGADLLGDGRPETLWLGIGTLLMLIGTFYFIVKGWGVTDKEAREYYSITILVPGIASAAYLSMFFGIGLTEVQVGSEMLDIYYARYADWLFTTPLLLLDLALLAKVDRVSIGTLVGVDALMIVTGLVGALSHTPLARYTWWLFSTICMIVVLYFLATSLRAAAKERGPEVASTFNTLTALVLVLWTAYPILWIIGTEGAGVVGLGIETLLFMVLDVTAKVGFGFILLRSRAILGDTEAPEPSAGAEASAAD</sequence>
<proteinExistence type="evidence at protein level"/>
<reference key="1">
    <citation type="journal article" date="1989" name="J. Biol. Chem.">
        <title>Isolation of a gene that encodes a new retinal protein, archaerhodopsin, from Halobacterium sp. aus-1.</title>
        <authorList>
            <person name="Sugiyama Y."/>
            <person name="Maeda M."/>
            <person name="Futai M."/>
            <person name="Mukohata Y."/>
        </authorList>
    </citation>
    <scope>NUCLEOTIDE SEQUENCE [GENOMIC DNA]</scope>
    <scope>PARTIAL PROTEIN SEQUENCE</scope>
    <source>
        <strain>DSM 11365 / JCM 9573 / AUS-1</strain>
    </source>
</reference>
<reference key="2">
    <citation type="journal article" date="1988" name="Biochem. Biophys. Res. Commun.">
        <title>An Australian halobacterium contains a novel proton pump retinal protein: archaerhodopsin.</title>
        <authorList>
            <person name="Mukohata Y."/>
            <person name="Sugiyama Y."/>
            <person name="Ihara K."/>
            <person name="Yoshida M."/>
        </authorList>
    </citation>
    <scope>PROTEIN SEQUENCE OF 7-39</scope>
    <source>
        <strain>DSM 11365 / JCM 9573 / AUS-1</strain>
    </source>
</reference>
<reference key="3">
    <citation type="journal article" date="2002" name="J. Photosci.">
        <title>X-ray crystallographic studies of archaerhodopsin.</title>
        <authorList>
            <person name="Enami N."/>
            <person name="Okumua H."/>
            <person name="Kouyama T."/>
        </authorList>
    </citation>
    <scope>X-RAY CRYSTALLOGRAPHY (3.4 ANGSTROMS) OF 21-260</scope>
    <source>
        <strain>DSM 11365 / JCM 9573 / AUS-1</strain>
    </source>
</reference>